<keyword id="KW-0002">3D-structure</keyword>
<keyword id="KW-0143">Chaperone</keyword>
<keyword id="KW-0186">Copper</keyword>
<keyword id="KW-0963">Cytoplasm</keyword>
<keyword id="KW-0479">Metal-binding</keyword>
<dbReference type="EMBL" id="Z46807">
    <property type="protein sequence ID" value="CAA86836.1"/>
    <property type="molecule type" value="Genomic_DNA"/>
</dbReference>
<dbReference type="EMBL" id="CP003504">
    <property type="protein sequence ID" value="AFM70728.1"/>
    <property type="molecule type" value="Genomic_DNA"/>
</dbReference>
<dbReference type="PIR" id="B56085">
    <property type="entry name" value="B56085"/>
</dbReference>
<dbReference type="RefSeq" id="WP_010718490.1">
    <property type="nucleotide sequence ID" value="NZ_KB946231.1"/>
</dbReference>
<dbReference type="PDB" id="1CPZ">
    <property type="method" value="NMR"/>
    <property type="chains" value="A=2-69"/>
</dbReference>
<dbReference type="PDBsum" id="1CPZ"/>
<dbReference type="BMRB" id="Q47840"/>
<dbReference type="SMR" id="Q47840"/>
<dbReference type="GeneID" id="56787082"/>
<dbReference type="KEGG" id="ehr:EHR_09080"/>
<dbReference type="eggNOG" id="COG2608">
    <property type="taxonomic scope" value="Bacteria"/>
</dbReference>
<dbReference type="HOGENOM" id="CLU_134973_10_4_9"/>
<dbReference type="EvolutionaryTrace" id="Q47840"/>
<dbReference type="Proteomes" id="UP000002895">
    <property type="component" value="Chromosome"/>
</dbReference>
<dbReference type="GO" id="GO:0005737">
    <property type="term" value="C:cytoplasm"/>
    <property type="evidence" value="ECO:0007669"/>
    <property type="project" value="UniProtKB-SubCell"/>
</dbReference>
<dbReference type="GO" id="GO:0005507">
    <property type="term" value="F:copper ion binding"/>
    <property type="evidence" value="ECO:0007669"/>
    <property type="project" value="InterPro"/>
</dbReference>
<dbReference type="CDD" id="cd00371">
    <property type="entry name" value="HMA"/>
    <property type="match status" value="1"/>
</dbReference>
<dbReference type="FunFam" id="3.30.70.100:FF:000001">
    <property type="entry name" value="ATPase copper transporting beta"/>
    <property type="match status" value="1"/>
</dbReference>
<dbReference type="Gene3D" id="3.30.70.100">
    <property type="match status" value="1"/>
</dbReference>
<dbReference type="InterPro" id="IPR017969">
    <property type="entry name" value="Heavy-metal-associated_CS"/>
</dbReference>
<dbReference type="InterPro" id="IPR006122">
    <property type="entry name" value="HMA_Cu_ion-bd"/>
</dbReference>
<dbReference type="InterPro" id="IPR006121">
    <property type="entry name" value="HMA_dom"/>
</dbReference>
<dbReference type="InterPro" id="IPR036163">
    <property type="entry name" value="HMA_dom_sf"/>
</dbReference>
<dbReference type="NCBIfam" id="NF033794">
    <property type="entry name" value="chaper_CopZ_Eh"/>
    <property type="match status" value="1"/>
</dbReference>
<dbReference type="NCBIfam" id="TIGR00003">
    <property type="entry name" value="copper ion binding protein"/>
    <property type="match status" value="1"/>
</dbReference>
<dbReference type="PANTHER" id="PTHR46594">
    <property type="entry name" value="P-TYPE CATION-TRANSPORTING ATPASE"/>
    <property type="match status" value="1"/>
</dbReference>
<dbReference type="PANTHER" id="PTHR46594:SF4">
    <property type="entry name" value="P-TYPE CATION-TRANSPORTING ATPASE"/>
    <property type="match status" value="1"/>
</dbReference>
<dbReference type="Pfam" id="PF00403">
    <property type="entry name" value="HMA"/>
    <property type="match status" value="1"/>
</dbReference>
<dbReference type="PRINTS" id="PR00942">
    <property type="entry name" value="CUATPASEI"/>
</dbReference>
<dbReference type="SUPFAM" id="SSF55008">
    <property type="entry name" value="HMA, heavy metal-associated domain"/>
    <property type="match status" value="1"/>
</dbReference>
<dbReference type="PROSITE" id="PS01047">
    <property type="entry name" value="HMA_1"/>
    <property type="match status" value="1"/>
</dbReference>
<dbReference type="PROSITE" id="PS50846">
    <property type="entry name" value="HMA_2"/>
    <property type="match status" value="1"/>
</dbReference>
<feature type="chain" id="PRO_0000079248" description="Copper chaperone CopZ">
    <location>
        <begin position="1"/>
        <end position="69"/>
    </location>
</feature>
<feature type="domain" description="HMA" evidence="1">
    <location>
        <begin position="1"/>
        <end position="67"/>
    </location>
</feature>
<feature type="binding site" evidence="1">
    <location>
        <position position="12"/>
    </location>
    <ligand>
        <name>Cu cation</name>
        <dbReference type="ChEBI" id="CHEBI:23378"/>
    </ligand>
</feature>
<feature type="binding site" evidence="1">
    <location>
        <position position="15"/>
    </location>
    <ligand>
        <name>Cu cation</name>
        <dbReference type="ChEBI" id="CHEBI:23378"/>
    </ligand>
</feature>
<feature type="strand" evidence="9">
    <location>
        <begin position="4"/>
        <end position="8"/>
    </location>
</feature>
<feature type="strand" evidence="9">
    <location>
        <begin position="12"/>
        <end position="14"/>
    </location>
</feature>
<feature type="helix" evidence="9">
    <location>
        <begin position="15"/>
        <end position="24"/>
    </location>
</feature>
<feature type="strand" evidence="9">
    <location>
        <begin position="29"/>
        <end position="35"/>
    </location>
</feature>
<feature type="turn" evidence="9">
    <location>
        <begin position="36"/>
        <end position="39"/>
    </location>
</feature>
<feature type="strand" evidence="9">
    <location>
        <begin position="40"/>
        <end position="45"/>
    </location>
</feature>
<feature type="turn" evidence="9">
    <location>
        <begin position="47"/>
        <end position="49"/>
    </location>
</feature>
<feature type="helix" evidence="9">
    <location>
        <begin position="52"/>
        <end position="60"/>
    </location>
</feature>
<feature type="strand" evidence="9">
    <location>
        <begin position="66"/>
        <end position="68"/>
    </location>
</feature>
<name>COPZ_ENTHA</name>
<accession>Q47840</accession>
<accession>I6SDM0</accession>
<protein>
    <recommendedName>
        <fullName>Copper chaperone CopZ</fullName>
    </recommendedName>
    <alternativeName>
        <fullName>Activator of copYZAB</fullName>
    </alternativeName>
</protein>
<gene>
    <name type="primary">copZ</name>
    <name type="ordered locus">EHR_09080</name>
</gene>
<sequence length="69" mass="7653">MKQEFSVKGMSCNHCVARIEEAVGRISGVKKVKVQLKKEKAVVKFDEANVQATEICQAINELGYQAEVI</sequence>
<organism>
    <name type="scientific">Enterococcus hirae (strain ATCC 9790 / DSM 20160 / JCM 8729 / LMG 6399 / NBRC 3181 / NCIMB 6459 / NCDO 1258 / NCTC 12367 / WDCM 00089 / R)</name>
    <dbReference type="NCBI Taxonomy" id="768486"/>
    <lineage>
        <taxon>Bacteria</taxon>
        <taxon>Bacillati</taxon>
        <taxon>Bacillota</taxon>
        <taxon>Bacilli</taxon>
        <taxon>Lactobacillales</taxon>
        <taxon>Enterococcaceae</taxon>
        <taxon>Enterococcus</taxon>
    </lineage>
</organism>
<evidence type="ECO:0000255" key="1">
    <source>
        <dbReference type="PROSITE-ProRule" id="PRU00280"/>
    </source>
</evidence>
<evidence type="ECO:0000269" key="2">
    <source>
    </source>
</evidence>
<evidence type="ECO:0000269" key="3">
    <source>
    </source>
</evidence>
<evidence type="ECO:0000269" key="4">
    <source>
    </source>
</evidence>
<evidence type="ECO:0000269" key="5">
    <source>
    </source>
</evidence>
<evidence type="ECO:0000269" key="6">
    <source>
    </source>
</evidence>
<evidence type="ECO:0000269" key="7">
    <source>
    </source>
</evidence>
<evidence type="ECO:0000305" key="8"/>
<evidence type="ECO:0007829" key="9">
    <source>
        <dbReference type="PDB" id="1CPZ"/>
    </source>
</evidence>
<comment type="function">
    <text evidence="2 6 7">Acts as a copper chaperone by delivering 2 Cu(+) ions to CopY Zn(2+)-bound form. This transfer results in displacement of zinc and dissociation of CopY from the promoter, allowing transcription of the copYZAB operon.</text>
</comment>
<comment type="subunit">
    <text evidence="4 5 6">Monomer in the absence of copper. Homodimer or homooligomer in the presence of copper ions. Interacts with the copper ATPase CopA. Interacts with CopY via a charge-based interaction.</text>
</comment>
<comment type="subcellular location">
    <subcellularLocation>
        <location evidence="8">Cytoplasm</location>
    </subcellularLocation>
</comment>
<comment type="induction">
    <text evidence="3">By Cu(+) and Cu(2+).</text>
</comment>
<comment type="miscellaneous">
    <text>Controlled by copper-induced proteolysis.</text>
</comment>
<proteinExistence type="evidence at protein level"/>
<reference key="1">
    <citation type="journal article" date="1995" name="J. Biol. Chem.">
        <title>Two trans-acting metalloregulatory proteins controlling expression of the copper-ATPases of Enterococcus hirae.</title>
        <authorList>
            <person name="Odermatt A."/>
            <person name="Solioz M."/>
        </authorList>
    </citation>
    <scope>NUCLEOTIDE SEQUENCE [GENOMIC DNA]</scope>
    <scope>FUNCTION</scope>
    <source>
        <strain>ATCC 9790 / DSM 20160 / JCM 8729 / LMG 6399 / NBRC 3181 / NCIMB 6459 / NCDO 1258 / NCTC 12367 / WDCM 00089 / R</strain>
    </source>
</reference>
<reference key="2">
    <citation type="journal article" date="2012" name="J. Bacteriol.">
        <title>Genome sequence of Enterococcus hirae (Streptococcus faecalis) ATCC 9790, a model organism for the study of ion transport, bioenergetics, and copper homeostasis.</title>
        <authorList>
            <person name="Gaechter T."/>
            <person name="Wunderlin C."/>
            <person name="Schmidheini T."/>
            <person name="Solioz M."/>
        </authorList>
    </citation>
    <scope>NUCLEOTIDE SEQUENCE [LARGE SCALE GENOMIC DNA]</scope>
    <source>
        <strain>ATCC 9790 / DSM 20160 / JCM 8729 / LMG 6399 / NBRC 3181 / NCIMB 6459 / NCDO 1258 / NCTC 12367 / WDCM 00089 / R</strain>
    </source>
</reference>
<reference key="3">
    <citation type="journal article" date="1999" name="Biochem. Biophys. Res. Commun.">
        <title>Effects of promoter mutations on the in vivo regulation of the cop operon of Enterococcus hirae by copper(I) and copper(II).</title>
        <authorList>
            <person name="Wunderli-Ye H."/>
            <person name="Solioz M."/>
        </authorList>
    </citation>
    <scope>INDUCTION BY COPPER</scope>
    <source>
        <strain>ATCC 9790 / DSM 20160 / JCM 8729 / LMG 6399 / NBRC 3181 / NCIMB 6459 / NCDO 1258 / NCTC 12367 / WDCM 00089 / R</strain>
    </source>
</reference>
<reference key="4">
    <citation type="journal article" date="1999" name="FEBS Lett.">
        <title>The Enterococcus hirae copper chaperone CopZ delivers copper(I) to the CopY repressor.</title>
        <authorList>
            <person name="Cobine P.A."/>
            <person name="Wickramasinghe W.A."/>
            <person name="Harrison M.D."/>
            <person name="Weber T."/>
            <person name="Solioz M."/>
            <person name="Dameron C.T."/>
        </authorList>
    </citation>
    <scope>FUNCTION</scope>
    <source>
        <strain>ATCC 9790 / DSM 20160 / JCM 8729 / LMG 6399 / NBRC 3181 / NCIMB 6459 / NCDO 1258 / NCTC 12367 / WDCM 00089 / R</strain>
    </source>
</reference>
<reference key="5">
    <citation type="journal article" date="2001" name="J. Biol. Chem.">
        <title>Copper-induced proteolysis of the CopZ copper chaperone of Enterococcus hirae.</title>
        <authorList>
            <person name="Lu Z.H."/>
            <person name="Solioz M."/>
        </authorList>
    </citation>
    <scope>REGULATION BY PROTEOLYSIS</scope>
    <source>
        <strain>ATCC 9790 / DSM 20160 / JCM 8729 / LMG 6399 / NBRC 3181 / NCIMB 6459 / NCDO 1258 / NCTC 12367 / WDCM 00089 / R</strain>
    </source>
</reference>
<reference key="6">
    <citation type="journal article" date="2001" name="Biochem. Biophys. Res. Commun.">
        <title>Interaction of the CopZ copper chaperone with the CopA copper ATPase of Enterococcus hirae assessed by surface plasmon resonance.</title>
        <authorList>
            <person name="Multhaup G."/>
            <person name="Strausak D."/>
            <person name="Bissig K.-D."/>
            <person name="Solioz M."/>
        </authorList>
    </citation>
    <scope>INTERACTION WITH COPA</scope>
    <source>
        <strain>ATCC 9790 / DSM 20160 / JCM 8729 / LMG 6399 / NBRC 3181 / NCIMB 6459 / NCDO 1258 / NCTC 12367 / WDCM 00089 / R</strain>
    </source>
</reference>
<reference key="7">
    <citation type="journal article" date="2002" name="Biochemistry">
        <title>Copper transfer from the Cu(I) chaperone, CopZ, to the repressor, Zn(II)CopY: metal coordination environments and protein interactions.</title>
        <authorList>
            <person name="Cobine P.A."/>
            <person name="George G.N."/>
            <person name="Jones C.E."/>
            <person name="Wickramasinghe W.A."/>
            <person name="Solioz M."/>
            <person name="Dameron C.T."/>
        </authorList>
    </citation>
    <scope>FUNCTION</scope>
    <scope>INTERACTION WITH COPY</scope>
    <source>
        <strain>ATCC 9790 / DSM 20160 / JCM 8729 / LMG 6399 / NBRC 3181 / NCIMB 6459 / NCDO 1258 / NCTC 12367 / WDCM 00089 / R</strain>
    </source>
</reference>
<reference key="8">
    <citation type="journal article" date="1999" name="J. Biol. Chem.">
        <title>NMR structure and metal interactions of the CopZ copper chaperone.</title>
        <authorList>
            <person name="Wimmer R."/>
            <person name="Herrmann T."/>
            <person name="Solioz M."/>
            <person name="Wuethrich K."/>
        </authorList>
    </citation>
    <scope>STRUCTURE BY NMR OF 3-69</scope>
    <scope>SUBUNIT</scope>
    <scope>COPPER BINDING</scope>
    <source>
        <strain>ATCC 9790 / DSM 20160 / JCM 8729 / LMG 6399 / NBRC 3181 / NCIMB 6459 / NCDO 1258 / NCTC 12367 / WDCM 00089 / R</strain>
    </source>
</reference>